<protein>
    <recommendedName>
        <fullName evidence="1">Protein PsbN</fullName>
    </recommendedName>
</protein>
<accession>B2X1X9</accession>
<proteinExistence type="inferred from homology"/>
<dbReference type="EMBL" id="EF587352">
    <property type="protein sequence ID" value="ABU88192.1"/>
    <property type="molecule type" value="Genomic_DNA"/>
</dbReference>
<dbReference type="EMBL" id="EU677193">
    <property type="protein sequence ID" value="ACC97237.1"/>
    <property type="molecule type" value="Genomic_DNA"/>
</dbReference>
<dbReference type="RefSeq" id="YP_002000435.1">
    <property type="nucleotide sequence ID" value="NC_011031.1"/>
</dbReference>
<dbReference type="SMR" id="B2X1X9"/>
<dbReference type="GeneID" id="6440155"/>
<dbReference type="GO" id="GO:0009535">
    <property type="term" value="C:chloroplast thylakoid membrane"/>
    <property type="evidence" value="ECO:0007669"/>
    <property type="project" value="UniProtKB-SubCell"/>
</dbReference>
<dbReference type="GO" id="GO:0015979">
    <property type="term" value="P:photosynthesis"/>
    <property type="evidence" value="ECO:0007669"/>
    <property type="project" value="InterPro"/>
</dbReference>
<dbReference type="HAMAP" id="MF_00293">
    <property type="entry name" value="PSII_PsbN"/>
    <property type="match status" value="1"/>
</dbReference>
<dbReference type="InterPro" id="IPR003398">
    <property type="entry name" value="PSII_PsbN"/>
</dbReference>
<dbReference type="PANTHER" id="PTHR35326">
    <property type="entry name" value="PROTEIN PSBN"/>
    <property type="match status" value="1"/>
</dbReference>
<dbReference type="PANTHER" id="PTHR35326:SF3">
    <property type="entry name" value="PROTEIN PSBN"/>
    <property type="match status" value="1"/>
</dbReference>
<dbReference type="Pfam" id="PF02468">
    <property type="entry name" value="PsbN"/>
    <property type="match status" value="1"/>
</dbReference>
<organism>
    <name type="scientific">Oedogonium cardiacum</name>
    <name type="common">Filamentous green alga</name>
    <dbReference type="NCBI Taxonomy" id="55995"/>
    <lineage>
        <taxon>Eukaryota</taxon>
        <taxon>Viridiplantae</taxon>
        <taxon>Chlorophyta</taxon>
        <taxon>core chlorophytes</taxon>
        <taxon>Chlorophyceae</taxon>
        <taxon>OCC clade</taxon>
        <taxon>Oedogoniales</taxon>
        <taxon>Oedogoniaceae</taxon>
        <taxon>Oedogonium</taxon>
    </lineage>
</organism>
<gene>
    <name evidence="1" type="primary">psbN</name>
</gene>
<feature type="chain" id="PRO_0000362206" description="Protein PsbN">
    <location>
        <begin position="1"/>
        <end position="44"/>
    </location>
</feature>
<feature type="transmembrane region" description="Helical" evidence="1">
    <location>
        <begin position="6"/>
        <end position="26"/>
    </location>
</feature>
<name>PSBN_OEDCA</name>
<keyword id="KW-0150">Chloroplast</keyword>
<keyword id="KW-0472">Membrane</keyword>
<keyword id="KW-0934">Plastid</keyword>
<keyword id="KW-0793">Thylakoid</keyword>
<keyword id="KW-0812">Transmembrane</keyword>
<keyword id="KW-1133">Transmembrane helix</keyword>
<reference key="1">
    <citation type="journal article" date="2008" name="J. Phycol.">
        <title>Deep division in the Chlorophyceae (Chlorophyta) revealed by chloroplast phylogenomic analyseS.</title>
        <authorList>
            <person name="Turmel M."/>
            <person name="Brouard J.-S."/>
            <person name="Gagnon C."/>
            <person name="Otis C."/>
            <person name="Lemieux C."/>
        </authorList>
        <dbReference type="AGRICOLA" id="IND44059346"/>
    </citation>
    <scope>NUCLEOTIDE SEQUENCE [GENOMIC DNA]</scope>
    <source>
        <strain>SAG 575-1b / CCAP 575/1B / UTEX LB 40</strain>
    </source>
</reference>
<reference key="2">
    <citation type="journal article" date="2008" name="BMC Genomics">
        <title>Chloroplast DNA sequence of the green alga Oedogonium cardiacum (Chlorophyceae): unique genome architecture, derived characters shared with the Chaetophorales and novel genes acquired through horizontal transfer.</title>
        <authorList>
            <person name="Brouard J.-S."/>
            <person name="Otis C."/>
            <person name="Lemieux C."/>
            <person name="Turmel M."/>
        </authorList>
    </citation>
    <scope>NUCLEOTIDE SEQUENCE [LARGE SCALE GENOMIC DNA]</scope>
    <source>
        <strain>SAG 575-1b / CCAP 575/1B / UTEX LB 40</strain>
    </source>
</reference>
<evidence type="ECO:0000255" key="1">
    <source>
        <dbReference type="HAMAP-Rule" id="MF_00293"/>
    </source>
</evidence>
<geneLocation type="chloroplast"/>
<sequence>MESPAFFFTLFLWFFLLSITIYSIYIGFGPPSKRLRDPFEEHED</sequence>
<comment type="function">
    <text evidence="1">May play a role in photosystem I and II biogenesis.</text>
</comment>
<comment type="subcellular location">
    <subcellularLocation>
        <location evidence="1">Plastid</location>
        <location evidence="1">Chloroplast thylakoid membrane</location>
        <topology evidence="1">Single-pass membrane protein</topology>
    </subcellularLocation>
</comment>
<comment type="similarity">
    <text evidence="1">Belongs to the PsbN family.</text>
</comment>
<comment type="caution">
    <text evidence="1">Originally thought to be a component of PSII; based on experiments in Synechocystis, N.tabacum and barley, and its absence from PSII in T.elongatus and T.vulcanus, this is probably not true.</text>
</comment>